<organism>
    <name type="scientific">Rhyparobia maderae</name>
    <name type="common">Madeira cockroach</name>
    <name type="synonym">Leucophaea maderae</name>
    <dbReference type="NCBI Taxonomy" id="36963"/>
    <lineage>
        <taxon>Eukaryota</taxon>
        <taxon>Metazoa</taxon>
        <taxon>Ecdysozoa</taxon>
        <taxon>Arthropoda</taxon>
        <taxon>Hexapoda</taxon>
        <taxon>Insecta</taxon>
        <taxon>Pterygota</taxon>
        <taxon>Neoptera</taxon>
        <taxon>Polyneoptera</taxon>
        <taxon>Dictyoptera</taxon>
        <taxon>Blattodea</taxon>
        <taxon>Blaberoidea</taxon>
        <taxon>Blaberidae</taxon>
        <taxon>Oxyhaloinae</taxon>
        <taxon>Rhyparobia</taxon>
    </lineage>
</organism>
<accession>P04428</accession>
<accession>P85771</accession>
<name>SK1_RHYMA</name>
<evidence type="ECO:0000269" key="1">
    <source>
    </source>
</evidence>
<evidence type="ECO:0000269" key="2">
    <source>
    </source>
</evidence>
<evidence type="ECO:0000305" key="3"/>
<reference key="1">
    <citation type="journal article" date="1986" name="Science">
        <title>Leucosulfakinin, a sulfated insect neuropeptide with homology to gastrin and cholecystokinin.</title>
        <authorList>
            <person name="Nachman R.J."/>
            <person name="Holman G.M."/>
            <person name="Haddon W.F."/>
            <person name="Ling N."/>
        </authorList>
    </citation>
    <scope>PROTEIN SEQUENCE</scope>
    <scope>SULFATION AT TYR-6</scope>
    <scope>AMIDATION AT PHE-11</scope>
</reference>
<reference key="2">
    <citation type="journal article" date="2009" name="BMC Evol. Biol.">
        <title>A proteomic approach for studying insect phylogeny: CAPA peptides of ancient insect taxa (Dictyoptera, Blattoptera) as a test case.</title>
        <authorList>
            <person name="Roth S."/>
            <person name="Fromm B."/>
            <person name="Gaede G."/>
            <person name="Predel R."/>
        </authorList>
    </citation>
    <scope>PROTEIN SEQUENCE</scope>
    <scope>AMIDATION AT PHE-11</scope>
    <source>
        <tissue>Corpora cardiaca</tissue>
    </source>
</reference>
<sequence>EQFEDYGHMRF</sequence>
<comment type="function">
    <text>Changes the frequency and amplitude of contractions of the hingut. Inhibits muscle contraction of hindgut.</text>
</comment>
<comment type="subcellular location">
    <subcellularLocation>
        <location>Secreted</location>
    </subcellularLocation>
</comment>
<comment type="similarity">
    <text evidence="3">Belongs to the gastrin/cholecystokinin family.</text>
</comment>
<protein>
    <recommendedName>
        <fullName>Sulfakinin-1</fullName>
        <shortName>RhyMa-SK-1</shortName>
    </recommendedName>
    <alternativeName>
        <fullName>Leucosulfakinin-1</fullName>
    </alternativeName>
    <alternativeName>
        <fullName>Leucosulfakinin-I</fullName>
        <shortName>LSK-I</shortName>
    </alternativeName>
</protein>
<proteinExistence type="evidence at protein level"/>
<dbReference type="PIR" id="A01622">
    <property type="entry name" value="GMROL"/>
</dbReference>
<dbReference type="GO" id="GO:0005576">
    <property type="term" value="C:extracellular region"/>
    <property type="evidence" value="ECO:0007669"/>
    <property type="project" value="UniProtKB-SubCell"/>
</dbReference>
<dbReference type="GO" id="GO:0005179">
    <property type="term" value="F:hormone activity"/>
    <property type="evidence" value="ECO:0007669"/>
    <property type="project" value="UniProtKB-KW"/>
</dbReference>
<dbReference type="GO" id="GO:0007218">
    <property type="term" value="P:neuropeptide signaling pathway"/>
    <property type="evidence" value="ECO:0007669"/>
    <property type="project" value="UniProtKB-KW"/>
</dbReference>
<dbReference type="InterPro" id="IPR013152">
    <property type="entry name" value="Gastrin/cholecystokinin_CS"/>
</dbReference>
<dbReference type="InterPro" id="IPR013259">
    <property type="entry name" value="Sulfakinin"/>
</dbReference>
<dbReference type="Pfam" id="PF08257">
    <property type="entry name" value="Sulfakinin"/>
    <property type="match status" value="1"/>
</dbReference>
<dbReference type="PROSITE" id="PS00259">
    <property type="entry name" value="GASTRIN"/>
    <property type="match status" value="1"/>
</dbReference>
<keyword id="KW-0027">Amidation</keyword>
<keyword id="KW-0903">Direct protein sequencing</keyword>
<keyword id="KW-0372">Hormone</keyword>
<keyword id="KW-0527">Neuropeptide</keyword>
<keyword id="KW-0964">Secreted</keyword>
<keyword id="KW-0765">Sulfation</keyword>
<feature type="peptide" id="PRO_0000043891" description="Sulfakinin-1">
    <location>
        <begin position="1"/>
        <end position="11"/>
    </location>
</feature>
<feature type="modified residue" description="Sulfotyrosine" evidence="2">
    <location>
        <position position="6"/>
    </location>
</feature>
<feature type="modified residue" description="Phenylalanine amide" evidence="1 2">
    <location>
        <position position="11"/>
    </location>
</feature>